<keyword id="KW-0227">DNA damage</keyword>
<keyword id="KW-0234">DNA repair</keyword>
<keyword id="KW-0235">DNA replication</keyword>
<keyword id="KW-0436">Ligase</keyword>
<keyword id="KW-0460">Magnesium</keyword>
<keyword id="KW-0464">Manganese</keyword>
<keyword id="KW-0479">Metal-binding</keyword>
<keyword id="KW-0520">NAD</keyword>
<keyword id="KW-0862">Zinc</keyword>
<feature type="chain" id="PRO_0000340389" description="DNA ligase">
    <location>
        <begin position="1"/>
        <end position="667"/>
    </location>
</feature>
<feature type="domain" description="BRCT" evidence="1">
    <location>
        <begin position="586"/>
        <end position="667"/>
    </location>
</feature>
<feature type="active site" description="N6-AMP-lysine intermediate" evidence="1">
    <location>
        <position position="112"/>
    </location>
</feature>
<feature type="binding site" evidence="1">
    <location>
        <begin position="32"/>
        <end position="36"/>
    </location>
    <ligand>
        <name>NAD(+)</name>
        <dbReference type="ChEBI" id="CHEBI:57540"/>
    </ligand>
</feature>
<feature type="binding site" evidence="1">
    <location>
        <begin position="81"/>
        <end position="82"/>
    </location>
    <ligand>
        <name>NAD(+)</name>
        <dbReference type="ChEBI" id="CHEBI:57540"/>
    </ligand>
</feature>
<feature type="binding site" evidence="1">
    <location>
        <position position="110"/>
    </location>
    <ligand>
        <name>NAD(+)</name>
        <dbReference type="ChEBI" id="CHEBI:57540"/>
    </ligand>
</feature>
<feature type="binding site" evidence="1">
    <location>
        <position position="133"/>
    </location>
    <ligand>
        <name>NAD(+)</name>
        <dbReference type="ChEBI" id="CHEBI:57540"/>
    </ligand>
</feature>
<feature type="binding site" evidence="1">
    <location>
        <position position="167"/>
    </location>
    <ligand>
        <name>NAD(+)</name>
        <dbReference type="ChEBI" id="CHEBI:57540"/>
    </ligand>
</feature>
<feature type="binding site" evidence="1">
    <location>
        <position position="283"/>
    </location>
    <ligand>
        <name>NAD(+)</name>
        <dbReference type="ChEBI" id="CHEBI:57540"/>
    </ligand>
</feature>
<feature type="binding site" evidence="1">
    <location>
        <position position="307"/>
    </location>
    <ligand>
        <name>NAD(+)</name>
        <dbReference type="ChEBI" id="CHEBI:57540"/>
    </ligand>
</feature>
<feature type="binding site" evidence="1">
    <location>
        <position position="401"/>
    </location>
    <ligand>
        <name>Zn(2+)</name>
        <dbReference type="ChEBI" id="CHEBI:29105"/>
    </ligand>
</feature>
<feature type="binding site" evidence="1">
    <location>
        <position position="404"/>
    </location>
    <ligand>
        <name>Zn(2+)</name>
        <dbReference type="ChEBI" id="CHEBI:29105"/>
    </ligand>
</feature>
<feature type="binding site" evidence="1">
    <location>
        <position position="419"/>
    </location>
    <ligand>
        <name>Zn(2+)</name>
        <dbReference type="ChEBI" id="CHEBI:29105"/>
    </ligand>
</feature>
<feature type="binding site" evidence="1">
    <location>
        <position position="424"/>
    </location>
    <ligand>
        <name>Zn(2+)</name>
        <dbReference type="ChEBI" id="CHEBI:29105"/>
    </ligand>
</feature>
<comment type="function">
    <text evidence="1">DNA ligase that catalyzes the formation of phosphodiester linkages between 5'-phosphoryl and 3'-hydroxyl groups in double-stranded DNA using NAD as a coenzyme and as the energy source for the reaction. It is essential for DNA replication and repair of damaged DNA.</text>
</comment>
<comment type="catalytic activity">
    <reaction evidence="1">
        <text>NAD(+) + (deoxyribonucleotide)n-3'-hydroxyl + 5'-phospho-(deoxyribonucleotide)m = (deoxyribonucleotide)n+m + AMP + beta-nicotinamide D-nucleotide.</text>
        <dbReference type="EC" id="6.5.1.2"/>
    </reaction>
</comment>
<comment type="cofactor">
    <cofactor evidence="1">
        <name>Mg(2+)</name>
        <dbReference type="ChEBI" id="CHEBI:18420"/>
    </cofactor>
    <cofactor evidence="1">
        <name>Mn(2+)</name>
        <dbReference type="ChEBI" id="CHEBI:29035"/>
    </cofactor>
</comment>
<comment type="similarity">
    <text evidence="1">Belongs to the NAD-dependent DNA ligase family. LigA subfamily.</text>
</comment>
<name>DNLJ_STAAT</name>
<evidence type="ECO:0000255" key="1">
    <source>
        <dbReference type="HAMAP-Rule" id="MF_01588"/>
    </source>
</evidence>
<proteinExistence type="inferred from homology"/>
<accession>A8Z2R8</accession>
<reference key="1">
    <citation type="journal article" date="2007" name="BMC Microbiol.">
        <title>Subtle genetic changes enhance virulence of methicillin resistant and sensitive Staphylococcus aureus.</title>
        <authorList>
            <person name="Highlander S.K."/>
            <person name="Hulten K.G."/>
            <person name="Qin X."/>
            <person name="Jiang H."/>
            <person name="Yerrapragada S."/>
            <person name="Mason E.O. Jr."/>
            <person name="Shang Y."/>
            <person name="Williams T.M."/>
            <person name="Fortunov R.M."/>
            <person name="Liu Y."/>
            <person name="Igboeli O."/>
            <person name="Petrosino J."/>
            <person name="Tirumalai M."/>
            <person name="Uzman A."/>
            <person name="Fox G.E."/>
            <person name="Cardenas A.M."/>
            <person name="Muzny D.M."/>
            <person name="Hemphill L."/>
            <person name="Ding Y."/>
            <person name="Dugan S."/>
            <person name="Blyth P.R."/>
            <person name="Buhay C.J."/>
            <person name="Dinh H.H."/>
            <person name="Hawes A.C."/>
            <person name="Holder M."/>
            <person name="Kovar C.L."/>
            <person name="Lee S.L."/>
            <person name="Liu W."/>
            <person name="Nazareth L.V."/>
            <person name="Wang Q."/>
            <person name="Zhou J."/>
            <person name="Kaplan S.L."/>
            <person name="Weinstock G.M."/>
        </authorList>
    </citation>
    <scope>NUCLEOTIDE SEQUENCE [LARGE SCALE GENOMIC DNA]</scope>
    <source>
        <strain>USA300 / TCH1516</strain>
    </source>
</reference>
<protein>
    <recommendedName>
        <fullName evidence="1">DNA ligase</fullName>
        <ecNumber evidence="1">6.5.1.2</ecNumber>
    </recommendedName>
    <alternativeName>
        <fullName evidence="1">Polydeoxyribonucleotide synthase [NAD(+)]</fullName>
    </alternativeName>
</protein>
<organism>
    <name type="scientific">Staphylococcus aureus (strain USA300 / TCH1516)</name>
    <dbReference type="NCBI Taxonomy" id="451516"/>
    <lineage>
        <taxon>Bacteria</taxon>
        <taxon>Bacillati</taxon>
        <taxon>Bacillota</taxon>
        <taxon>Bacilli</taxon>
        <taxon>Bacillales</taxon>
        <taxon>Staphylococcaceae</taxon>
        <taxon>Staphylococcus</taxon>
    </lineage>
</organism>
<sequence>MADLSSRVNELHDLLNQYSYEYYVEDNPSVPDSEYDKLLHELIKIEEEHPEYKTVDSPTVRVGGEAQASFNKVNHDTPMLSLGNAFNEDDLRKFDQRIREQIGNVEYMCELKIDGLAVSLKYVDGYFVQGLTRGDGTTGEDITENLKTIHAIPLKMKEPLNVEVRGEAYMPRRSFLRLNEEKEKNDEQLFANPRNAAAGSLRQLDSKLTAKRKLSVFIYSVNDFTDFNARSQSEALDELDKLGFTTNKNRARVNNIDGVLEYIEKWTSQRESLPYDIDGIVIKVNDLDQQDEMGFTQKSPRWAIAYKFPAEEVVTKLLDIELSIGRTGVVTPTAILEPVKVAGTTVSRASLHNEDLIHDRDIRIGDSVVVKKAGDIIPEVVRSIPERRPEDAVTYHMPTHCPSCGHELVRIEGEVALRCINPKCQAQLVEGLIHFVSRQAMNIDGLGTKIIQQLYQSELIKDVADIFYLTEEDLLPLDRMGQKKVDNLLAAIQQAKDNSLENLLFGLGIRHLGVKASQVLAEKYETIDRLLTVTEAELVEIHDIGDKVAQSVVTYLENEDIRALIQKLKDKHVNMIYKGIKTSDIEGHPEFSGKTIVLTGKLHQMTRNEASKWLASQGAKVTSSVTKNTDVVIAGEDAGSKLTKAQSLGIEIWTEQQFVDKQNELNS</sequence>
<gene>
    <name evidence="1" type="primary">ligA</name>
    <name type="ordered locus">USA300HOU_1905</name>
</gene>
<dbReference type="EC" id="6.5.1.2" evidence="1"/>
<dbReference type="EMBL" id="CP000730">
    <property type="protein sequence ID" value="ABX29907.1"/>
    <property type="molecule type" value="Genomic_DNA"/>
</dbReference>
<dbReference type="RefSeq" id="WP_000774565.1">
    <property type="nucleotide sequence ID" value="NC_010079.1"/>
</dbReference>
<dbReference type="SMR" id="A8Z2R8"/>
<dbReference type="KEGG" id="sax:USA300HOU_1905"/>
<dbReference type="HOGENOM" id="CLU_007764_2_1_9"/>
<dbReference type="GO" id="GO:0005829">
    <property type="term" value="C:cytosol"/>
    <property type="evidence" value="ECO:0007669"/>
    <property type="project" value="TreeGrafter"/>
</dbReference>
<dbReference type="GO" id="GO:0003677">
    <property type="term" value="F:DNA binding"/>
    <property type="evidence" value="ECO:0007669"/>
    <property type="project" value="InterPro"/>
</dbReference>
<dbReference type="GO" id="GO:0003911">
    <property type="term" value="F:DNA ligase (NAD+) activity"/>
    <property type="evidence" value="ECO:0007669"/>
    <property type="project" value="UniProtKB-UniRule"/>
</dbReference>
<dbReference type="GO" id="GO:0046872">
    <property type="term" value="F:metal ion binding"/>
    <property type="evidence" value="ECO:0007669"/>
    <property type="project" value="UniProtKB-KW"/>
</dbReference>
<dbReference type="GO" id="GO:0006281">
    <property type="term" value="P:DNA repair"/>
    <property type="evidence" value="ECO:0007669"/>
    <property type="project" value="UniProtKB-KW"/>
</dbReference>
<dbReference type="GO" id="GO:0006260">
    <property type="term" value="P:DNA replication"/>
    <property type="evidence" value="ECO:0007669"/>
    <property type="project" value="UniProtKB-KW"/>
</dbReference>
<dbReference type="CDD" id="cd17748">
    <property type="entry name" value="BRCT_DNA_ligase_like"/>
    <property type="match status" value="1"/>
</dbReference>
<dbReference type="CDD" id="cd00114">
    <property type="entry name" value="LIGANc"/>
    <property type="match status" value="1"/>
</dbReference>
<dbReference type="FunFam" id="1.10.150.20:FF:000006">
    <property type="entry name" value="DNA ligase"/>
    <property type="match status" value="1"/>
</dbReference>
<dbReference type="FunFam" id="1.10.150.20:FF:000007">
    <property type="entry name" value="DNA ligase"/>
    <property type="match status" value="1"/>
</dbReference>
<dbReference type="FunFam" id="1.10.287.610:FF:000005">
    <property type="entry name" value="DNA ligase"/>
    <property type="match status" value="1"/>
</dbReference>
<dbReference type="FunFam" id="2.40.50.140:FF:000012">
    <property type="entry name" value="DNA ligase"/>
    <property type="match status" value="1"/>
</dbReference>
<dbReference type="FunFam" id="3.30.470.30:FF:000001">
    <property type="entry name" value="DNA ligase"/>
    <property type="match status" value="1"/>
</dbReference>
<dbReference type="FunFam" id="3.40.50.10190:FF:000045">
    <property type="entry name" value="DNA ligase"/>
    <property type="match status" value="1"/>
</dbReference>
<dbReference type="FunFam" id="6.20.10.30:FF:000002">
    <property type="entry name" value="DNA ligase"/>
    <property type="match status" value="1"/>
</dbReference>
<dbReference type="Gene3D" id="6.20.10.30">
    <property type="match status" value="1"/>
</dbReference>
<dbReference type="Gene3D" id="1.10.150.20">
    <property type="entry name" value="5' to 3' exonuclease, C-terminal subdomain"/>
    <property type="match status" value="2"/>
</dbReference>
<dbReference type="Gene3D" id="3.40.50.10190">
    <property type="entry name" value="BRCT domain"/>
    <property type="match status" value="1"/>
</dbReference>
<dbReference type="Gene3D" id="3.30.470.30">
    <property type="entry name" value="DNA ligase/mRNA capping enzyme"/>
    <property type="match status" value="1"/>
</dbReference>
<dbReference type="Gene3D" id="1.10.287.610">
    <property type="entry name" value="Helix hairpin bin"/>
    <property type="match status" value="1"/>
</dbReference>
<dbReference type="Gene3D" id="2.40.50.140">
    <property type="entry name" value="Nucleic acid-binding proteins"/>
    <property type="match status" value="1"/>
</dbReference>
<dbReference type="HAMAP" id="MF_01588">
    <property type="entry name" value="DNA_ligase_A"/>
    <property type="match status" value="1"/>
</dbReference>
<dbReference type="InterPro" id="IPR001357">
    <property type="entry name" value="BRCT_dom"/>
</dbReference>
<dbReference type="InterPro" id="IPR036420">
    <property type="entry name" value="BRCT_dom_sf"/>
</dbReference>
<dbReference type="InterPro" id="IPR041663">
    <property type="entry name" value="DisA/LigA_HHH"/>
</dbReference>
<dbReference type="InterPro" id="IPR001679">
    <property type="entry name" value="DNA_ligase"/>
</dbReference>
<dbReference type="InterPro" id="IPR018239">
    <property type="entry name" value="DNA_ligase_AS"/>
</dbReference>
<dbReference type="InterPro" id="IPR033136">
    <property type="entry name" value="DNA_ligase_CS"/>
</dbReference>
<dbReference type="InterPro" id="IPR013839">
    <property type="entry name" value="DNAligase_adenylation"/>
</dbReference>
<dbReference type="InterPro" id="IPR013840">
    <property type="entry name" value="DNAligase_N"/>
</dbReference>
<dbReference type="InterPro" id="IPR003583">
    <property type="entry name" value="Hlx-hairpin-Hlx_DNA-bd_motif"/>
</dbReference>
<dbReference type="InterPro" id="IPR012340">
    <property type="entry name" value="NA-bd_OB-fold"/>
</dbReference>
<dbReference type="InterPro" id="IPR004150">
    <property type="entry name" value="NAD_DNA_ligase_OB"/>
</dbReference>
<dbReference type="InterPro" id="IPR010994">
    <property type="entry name" value="RuvA_2-like"/>
</dbReference>
<dbReference type="InterPro" id="IPR004149">
    <property type="entry name" value="Znf_DNAligase_C4"/>
</dbReference>
<dbReference type="NCBIfam" id="TIGR00575">
    <property type="entry name" value="dnlj"/>
    <property type="match status" value="1"/>
</dbReference>
<dbReference type="NCBIfam" id="NF005932">
    <property type="entry name" value="PRK07956.1"/>
    <property type="match status" value="1"/>
</dbReference>
<dbReference type="PANTHER" id="PTHR23389">
    <property type="entry name" value="CHROMOSOME TRANSMISSION FIDELITY FACTOR 18"/>
    <property type="match status" value="1"/>
</dbReference>
<dbReference type="PANTHER" id="PTHR23389:SF9">
    <property type="entry name" value="DNA LIGASE"/>
    <property type="match status" value="1"/>
</dbReference>
<dbReference type="Pfam" id="PF00533">
    <property type="entry name" value="BRCT"/>
    <property type="match status" value="1"/>
</dbReference>
<dbReference type="Pfam" id="PF01653">
    <property type="entry name" value="DNA_ligase_aden"/>
    <property type="match status" value="1"/>
</dbReference>
<dbReference type="Pfam" id="PF03120">
    <property type="entry name" value="DNA_ligase_OB"/>
    <property type="match status" value="1"/>
</dbReference>
<dbReference type="Pfam" id="PF03119">
    <property type="entry name" value="DNA_ligase_ZBD"/>
    <property type="match status" value="1"/>
</dbReference>
<dbReference type="Pfam" id="PF12826">
    <property type="entry name" value="HHH_2"/>
    <property type="match status" value="1"/>
</dbReference>
<dbReference type="PIRSF" id="PIRSF001604">
    <property type="entry name" value="LigA"/>
    <property type="match status" value="1"/>
</dbReference>
<dbReference type="SMART" id="SM00292">
    <property type="entry name" value="BRCT"/>
    <property type="match status" value="1"/>
</dbReference>
<dbReference type="SMART" id="SM00278">
    <property type="entry name" value="HhH1"/>
    <property type="match status" value="3"/>
</dbReference>
<dbReference type="SMART" id="SM00532">
    <property type="entry name" value="LIGANc"/>
    <property type="match status" value="1"/>
</dbReference>
<dbReference type="SUPFAM" id="SSF52113">
    <property type="entry name" value="BRCT domain"/>
    <property type="match status" value="1"/>
</dbReference>
<dbReference type="SUPFAM" id="SSF56091">
    <property type="entry name" value="DNA ligase/mRNA capping enzyme, catalytic domain"/>
    <property type="match status" value="1"/>
</dbReference>
<dbReference type="SUPFAM" id="SSF50249">
    <property type="entry name" value="Nucleic acid-binding proteins"/>
    <property type="match status" value="1"/>
</dbReference>
<dbReference type="SUPFAM" id="SSF47781">
    <property type="entry name" value="RuvA domain 2-like"/>
    <property type="match status" value="1"/>
</dbReference>
<dbReference type="PROSITE" id="PS50172">
    <property type="entry name" value="BRCT"/>
    <property type="match status" value="1"/>
</dbReference>
<dbReference type="PROSITE" id="PS01055">
    <property type="entry name" value="DNA_LIGASE_N1"/>
    <property type="match status" value="1"/>
</dbReference>
<dbReference type="PROSITE" id="PS01056">
    <property type="entry name" value="DNA_LIGASE_N2"/>
    <property type="match status" value="1"/>
</dbReference>